<evidence type="ECO:0000255" key="1">
    <source>
        <dbReference type="HAMAP-Rule" id="MF_00034"/>
    </source>
</evidence>
<accession>Q46JY8</accession>
<sequence length="154" mass="17013">MRIIGIDPGLARVGYGIIDEIEGKKIMIDCGIIETKSTQKEEERLVEISNDLSSIIKKWNPNSAAVEKFFFYRSSTTISVVQARGVIMMTLGKYKLPIQEFPPMQIKLAVTGYGHSDKNDVLNSVMHELNVTSPPKPDDAADALAIALTGIYLK</sequence>
<reference key="1">
    <citation type="journal article" date="2007" name="PLoS Genet.">
        <title>Patterns and implications of gene gain and loss in the evolution of Prochlorococcus.</title>
        <authorList>
            <person name="Kettler G.C."/>
            <person name="Martiny A.C."/>
            <person name="Huang K."/>
            <person name="Zucker J."/>
            <person name="Coleman M.L."/>
            <person name="Rodrigue S."/>
            <person name="Chen F."/>
            <person name="Lapidus A."/>
            <person name="Ferriera S."/>
            <person name="Johnson J."/>
            <person name="Steglich C."/>
            <person name="Church G.M."/>
            <person name="Richardson P."/>
            <person name="Chisholm S.W."/>
        </authorList>
    </citation>
    <scope>NUCLEOTIDE SEQUENCE [LARGE SCALE GENOMIC DNA]</scope>
    <source>
        <strain>NATL2A</strain>
    </source>
</reference>
<feature type="chain" id="PRO_0000225161" description="Crossover junction endodeoxyribonuclease RuvC">
    <location>
        <begin position="1"/>
        <end position="154"/>
    </location>
</feature>
<feature type="active site" evidence="1">
    <location>
        <position position="7"/>
    </location>
</feature>
<feature type="active site" evidence="1">
    <location>
        <position position="67"/>
    </location>
</feature>
<feature type="active site" evidence="1">
    <location>
        <position position="139"/>
    </location>
</feature>
<feature type="binding site" evidence="1">
    <location>
        <position position="7"/>
    </location>
    <ligand>
        <name>Mg(2+)</name>
        <dbReference type="ChEBI" id="CHEBI:18420"/>
        <label>1</label>
    </ligand>
</feature>
<feature type="binding site" evidence="1">
    <location>
        <position position="67"/>
    </location>
    <ligand>
        <name>Mg(2+)</name>
        <dbReference type="ChEBI" id="CHEBI:18420"/>
        <label>2</label>
    </ligand>
</feature>
<feature type="binding site" evidence="1">
    <location>
        <position position="139"/>
    </location>
    <ligand>
        <name>Mg(2+)</name>
        <dbReference type="ChEBI" id="CHEBI:18420"/>
        <label>1</label>
    </ligand>
</feature>
<name>RUVC_PROMT</name>
<dbReference type="EC" id="3.1.21.10" evidence="1"/>
<dbReference type="EMBL" id="CP000095">
    <property type="protein sequence ID" value="AAZ58190.1"/>
    <property type="molecule type" value="Genomic_DNA"/>
</dbReference>
<dbReference type="RefSeq" id="WP_011294788.1">
    <property type="nucleotide sequence ID" value="NC_007335.2"/>
</dbReference>
<dbReference type="SMR" id="Q46JY8"/>
<dbReference type="STRING" id="59920.PMN2A_0699"/>
<dbReference type="KEGG" id="pmn:PMN2A_0699"/>
<dbReference type="HOGENOM" id="CLU_091257_3_1_3"/>
<dbReference type="OrthoDB" id="9805499at2"/>
<dbReference type="PhylomeDB" id="Q46JY8"/>
<dbReference type="Proteomes" id="UP000002535">
    <property type="component" value="Chromosome"/>
</dbReference>
<dbReference type="GO" id="GO:0005737">
    <property type="term" value="C:cytoplasm"/>
    <property type="evidence" value="ECO:0007669"/>
    <property type="project" value="UniProtKB-SubCell"/>
</dbReference>
<dbReference type="GO" id="GO:0048476">
    <property type="term" value="C:Holliday junction resolvase complex"/>
    <property type="evidence" value="ECO:0007669"/>
    <property type="project" value="UniProtKB-UniRule"/>
</dbReference>
<dbReference type="GO" id="GO:0008821">
    <property type="term" value="F:crossover junction DNA endonuclease activity"/>
    <property type="evidence" value="ECO:0007669"/>
    <property type="project" value="UniProtKB-UniRule"/>
</dbReference>
<dbReference type="GO" id="GO:0003677">
    <property type="term" value="F:DNA binding"/>
    <property type="evidence" value="ECO:0007669"/>
    <property type="project" value="UniProtKB-KW"/>
</dbReference>
<dbReference type="GO" id="GO:0000287">
    <property type="term" value="F:magnesium ion binding"/>
    <property type="evidence" value="ECO:0007669"/>
    <property type="project" value="UniProtKB-UniRule"/>
</dbReference>
<dbReference type="GO" id="GO:0006310">
    <property type="term" value="P:DNA recombination"/>
    <property type="evidence" value="ECO:0007669"/>
    <property type="project" value="UniProtKB-UniRule"/>
</dbReference>
<dbReference type="GO" id="GO:0006281">
    <property type="term" value="P:DNA repair"/>
    <property type="evidence" value="ECO:0007669"/>
    <property type="project" value="UniProtKB-UniRule"/>
</dbReference>
<dbReference type="CDD" id="cd16962">
    <property type="entry name" value="RuvC"/>
    <property type="match status" value="1"/>
</dbReference>
<dbReference type="FunFam" id="3.30.420.10:FF:000002">
    <property type="entry name" value="Crossover junction endodeoxyribonuclease RuvC"/>
    <property type="match status" value="1"/>
</dbReference>
<dbReference type="Gene3D" id="3.30.420.10">
    <property type="entry name" value="Ribonuclease H-like superfamily/Ribonuclease H"/>
    <property type="match status" value="1"/>
</dbReference>
<dbReference type="HAMAP" id="MF_00034">
    <property type="entry name" value="RuvC"/>
    <property type="match status" value="1"/>
</dbReference>
<dbReference type="InterPro" id="IPR012337">
    <property type="entry name" value="RNaseH-like_sf"/>
</dbReference>
<dbReference type="InterPro" id="IPR036397">
    <property type="entry name" value="RNaseH_sf"/>
</dbReference>
<dbReference type="InterPro" id="IPR002176">
    <property type="entry name" value="X-over_junc_endoDNase_RuvC"/>
</dbReference>
<dbReference type="NCBIfam" id="NF000711">
    <property type="entry name" value="PRK00039.2-1"/>
    <property type="match status" value="1"/>
</dbReference>
<dbReference type="NCBIfam" id="TIGR00228">
    <property type="entry name" value="ruvC"/>
    <property type="match status" value="1"/>
</dbReference>
<dbReference type="PANTHER" id="PTHR30194">
    <property type="entry name" value="CROSSOVER JUNCTION ENDODEOXYRIBONUCLEASE RUVC"/>
    <property type="match status" value="1"/>
</dbReference>
<dbReference type="PANTHER" id="PTHR30194:SF3">
    <property type="entry name" value="CROSSOVER JUNCTION ENDODEOXYRIBONUCLEASE RUVC"/>
    <property type="match status" value="1"/>
</dbReference>
<dbReference type="Pfam" id="PF02075">
    <property type="entry name" value="RuvC"/>
    <property type="match status" value="1"/>
</dbReference>
<dbReference type="PRINTS" id="PR00696">
    <property type="entry name" value="RSOLVASERUVC"/>
</dbReference>
<dbReference type="SUPFAM" id="SSF53098">
    <property type="entry name" value="Ribonuclease H-like"/>
    <property type="match status" value="1"/>
</dbReference>
<organism>
    <name type="scientific">Prochlorococcus marinus (strain NATL2A)</name>
    <dbReference type="NCBI Taxonomy" id="59920"/>
    <lineage>
        <taxon>Bacteria</taxon>
        <taxon>Bacillati</taxon>
        <taxon>Cyanobacteriota</taxon>
        <taxon>Cyanophyceae</taxon>
        <taxon>Synechococcales</taxon>
        <taxon>Prochlorococcaceae</taxon>
        <taxon>Prochlorococcus</taxon>
    </lineage>
</organism>
<proteinExistence type="inferred from homology"/>
<comment type="function">
    <text evidence="1">The RuvA-RuvB-RuvC complex processes Holliday junction (HJ) DNA during genetic recombination and DNA repair. Endonuclease that resolves HJ intermediates. Cleaves cruciform DNA by making single-stranded nicks across the HJ at symmetrical positions within the homologous arms, yielding a 5'-phosphate and a 3'-hydroxyl group; requires a central core of homology in the junction. The consensus cleavage sequence is 5'-(A/T)TT(C/G)-3'. Cleavage occurs on the 3'-side of the TT dinucleotide at the point of strand exchange. HJ branch migration catalyzed by RuvA-RuvB allows RuvC to scan DNA until it finds its consensus sequence, where it cleaves and resolves the cruciform DNA.</text>
</comment>
<comment type="catalytic activity">
    <reaction evidence="1">
        <text>Endonucleolytic cleavage at a junction such as a reciprocal single-stranded crossover between two homologous DNA duplexes (Holliday junction).</text>
        <dbReference type="EC" id="3.1.21.10"/>
    </reaction>
</comment>
<comment type="cofactor">
    <cofactor evidence="1">
        <name>Mg(2+)</name>
        <dbReference type="ChEBI" id="CHEBI:18420"/>
    </cofactor>
    <text evidence="1">Binds 2 Mg(2+) ion per subunit.</text>
</comment>
<comment type="subunit">
    <text evidence="1">Homodimer which binds Holliday junction (HJ) DNA. The HJ becomes 2-fold symmetrical on binding to RuvC with unstacked arms; it has a different conformation from HJ DNA in complex with RuvA. In the full resolvosome a probable DNA-RuvA(4)-RuvB(12)-RuvC(2) complex forms which resolves the HJ.</text>
</comment>
<comment type="subcellular location">
    <subcellularLocation>
        <location evidence="1">Cytoplasm</location>
    </subcellularLocation>
</comment>
<comment type="similarity">
    <text evidence="1">Belongs to the RuvC family.</text>
</comment>
<gene>
    <name evidence="1" type="primary">ruvC</name>
    <name type="ordered locus">PMN2A_0699</name>
</gene>
<protein>
    <recommendedName>
        <fullName evidence="1">Crossover junction endodeoxyribonuclease RuvC</fullName>
        <ecNumber evidence="1">3.1.21.10</ecNumber>
    </recommendedName>
    <alternativeName>
        <fullName evidence="1">Holliday junction nuclease RuvC</fullName>
    </alternativeName>
    <alternativeName>
        <fullName evidence="1">Holliday junction resolvase RuvC</fullName>
    </alternativeName>
</protein>
<keyword id="KW-0963">Cytoplasm</keyword>
<keyword id="KW-0227">DNA damage</keyword>
<keyword id="KW-0233">DNA recombination</keyword>
<keyword id="KW-0234">DNA repair</keyword>
<keyword id="KW-0238">DNA-binding</keyword>
<keyword id="KW-0255">Endonuclease</keyword>
<keyword id="KW-0378">Hydrolase</keyword>
<keyword id="KW-0460">Magnesium</keyword>
<keyword id="KW-0479">Metal-binding</keyword>
<keyword id="KW-0540">Nuclease</keyword>
<keyword id="KW-1185">Reference proteome</keyword>